<proteinExistence type="inferred from homology"/>
<organism>
    <name type="scientific">Enterococcus faecalis (strain ATCC 700802 / V583)</name>
    <dbReference type="NCBI Taxonomy" id="226185"/>
    <lineage>
        <taxon>Bacteria</taxon>
        <taxon>Bacillati</taxon>
        <taxon>Bacillota</taxon>
        <taxon>Bacilli</taxon>
        <taxon>Lactobacillales</taxon>
        <taxon>Enterococcaceae</taxon>
        <taxon>Enterococcus</taxon>
    </lineage>
</organism>
<reference key="1">
    <citation type="journal article" date="1997" name="J. Bacteriol.">
        <title>Identification and characterization of cell wall-cell division gene clusters in pathogenic Gram-positive cocci.</title>
        <authorList>
            <person name="Pucci M.J."/>
            <person name="Thanassi J.A."/>
            <person name="Discotto L.F."/>
            <person name="Kessler R.E."/>
            <person name="Dougherty T.J."/>
        </authorList>
    </citation>
    <scope>NUCLEOTIDE SEQUENCE [GENOMIC DNA]</scope>
    <source>
        <strain>A24836</strain>
    </source>
</reference>
<reference key="2">
    <citation type="journal article" date="2003" name="Science">
        <title>Role of mobile DNA in the evolution of vancomycin-resistant Enterococcus faecalis.</title>
        <authorList>
            <person name="Paulsen I.T."/>
            <person name="Banerjei L."/>
            <person name="Myers G.S.A."/>
            <person name="Nelson K.E."/>
            <person name="Seshadri R."/>
            <person name="Read T.D."/>
            <person name="Fouts D.E."/>
            <person name="Eisen J.A."/>
            <person name="Gill S.R."/>
            <person name="Heidelberg J.F."/>
            <person name="Tettelin H."/>
            <person name="Dodson R.J."/>
            <person name="Umayam L.A."/>
            <person name="Brinkac L.M."/>
            <person name="Beanan M.J."/>
            <person name="Daugherty S.C."/>
            <person name="DeBoy R.T."/>
            <person name="Durkin S.A."/>
            <person name="Kolonay J.F."/>
            <person name="Madupu R."/>
            <person name="Nelson W.C."/>
            <person name="Vamathevan J.J."/>
            <person name="Tran B."/>
            <person name="Upton J."/>
            <person name="Hansen T."/>
            <person name="Shetty J."/>
            <person name="Khouri H.M."/>
            <person name="Utterback T.R."/>
            <person name="Radune D."/>
            <person name="Ketchum K.A."/>
            <person name="Dougherty B.A."/>
            <person name="Fraser C.M."/>
        </authorList>
    </citation>
    <scope>NUCLEOTIDE SEQUENCE [LARGE SCALE GENOMIC DNA]</scope>
    <source>
        <strain>ATCC 700802 / V583</strain>
    </source>
</reference>
<sequence>MEWTQIFIPIVVSFAITVSVMPLFIGYFQMKKQGQVTREDGPTWHSVKTGTPTMGGVVFLVASLITSLAMGLFFHQFTPSLLIILFILVLYGLLGYLDDFIKVFKKRNMGLNSRQKLIGQIFGGLVFYFVYRSEGFSDTLDLFGVAEVPLGIFYGVFIIFWLVGFSNAVNLTDGIDGLVAGLGTISFGTYAIIAWKQQQFDVVIICLSVIGGLIGFFPYNRKPAKIFMGDVGSLALGGLLAAISIILHQEWTLLLIGLVYVCETASVILQVASFKLFGRRIFKMSPIHHHFEMCGWSEWKIDFVFWSVGLICSGITLWILF</sequence>
<accession>O07107</accession>
<evidence type="ECO:0000255" key="1">
    <source>
        <dbReference type="HAMAP-Rule" id="MF_00038"/>
    </source>
</evidence>
<evidence type="ECO:0000305" key="2"/>
<feature type="chain" id="PRO_0000108823" description="Phospho-N-acetylmuramoyl-pentapeptide-transferase">
    <location>
        <begin position="1"/>
        <end position="321"/>
    </location>
</feature>
<feature type="transmembrane region" description="Helical" evidence="1">
    <location>
        <begin position="6"/>
        <end position="26"/>
    </location>
</feature>
<feature type="transmembrane region" description="Helical" evidence="1">
    <location>
        <begin position="54"/>
        <end position="74"/>
    </location>
</feature>
<feature type="transmembrane region" description="Helical" evidence="1">
    <location>
        <begin position="77"/>
        <end position="97"/>
    </location>
</feature>
<feature type="transmembrane region" description="Helical" evidence="1">
    <location>
        <begin position="117"/>
        <end position="137"/>
    </location>
</feature>
<feature type="transmembrane region" description="Helical" evidence="1">
    <location>
        <begin position="143"/>
        <end position="163"/>
    </location>
</feature>
<feature type="transmembrane region" description="Helical" evidence="1">
    <location>
        <begin position="175"/>
        <end position="195"/>
    </location>
</feature>
<feature type="transmembrane region" description="Helical" evidence="1">
    <location>
        <begin position="200"/>
        <end position="220"/>
    </location>
</feature>
<feature type="transmembrane region" description="Helical" evidence="1">
    <location>
        <begin position="226"/>
        <end position="246"/>
    </location>
</feature>
<feature type="transmembrane region" description="Helical" evidence="1">
    <location>
        <begin position="251"/>
        <end position="271"/>
    </location>
</feature>
<feature type="transmembrane region" description="Helical" evidence="1">
    <location>
        <begin position="301"/>
        <end position="321"/>
    </location>
</feature>
<feature type="sequence conflict" description="In Ref. 1; AAC45634." evidence="2" ref="1">
    <original>D</original>
    <variation>N</variation>
    <location>
        <position position="173"/>
    </location>
</feature>
<feature type="sequence conflict" description="In Ref. 1; AAC45634." evidence="2" ref="1">
    <original>S</original>
    <variation>I</variation>
    <location>
        <position position="208"/>
    </location>
</feature>
<feature type="sequence conflict" description="In Ref. 1; AAC45634." evidence="2" ref="1">
    <original>R</original>
    <variation>K</variation>
    <location>
        <position position="221"/>
    </location>
</feature>
<feature type="sequence conflict" description="In Ref. 1; AAC45634." evidence="2" ref="1">
    <original>A</original>
    <variation>P</variation>
    <location>
        <position position="224"/>
    </location>
</feature>
<feature type="sequence conflict" description="In Ref. 1; AAC45634." evidence="2" ref="1">
    <original>F</original>
    <variation>S</variation>
    <location>
        <position position="227"/>
    </location>
</feature>
<feature type="sequence conflict" description="In Ref. 1; AAC45634." evidence="2" ref="1">
    <original>A</original>
    <variation>T</variation>
    <location>
        <position position="235"/>
    </location>
</feature>
<feature type="sequence conflict" description="In Ref. 1; AAC45634." evidence="2" ref="1">
    <original>A</original>
    <variation>V</variation>
    <location>
        <position position="272"/>
    </location>
</feature>
<protein>
    <recommendedName>
        <fullName evidence="1">Phospho-N-acetylmuramoyl-pentapeptide-transferase</fullName>
        <ecNumber evidence="1">2.7.8.13</ecNumber>
    </recommendedName>
    <alternativeName>
        <fullName evidence="1">UDP-MurNAc-pentapeptide phosphotransferase</fullName>
    </alternativeName>
</protein>
<comment type="function">
    <text evidence="1">Catalyzes the initial step of the lipid cycle reactions in the biosynthesis of the cell wall peptidoglycan: transfers peptidoglycan precursor phospho-MurNAc-pentapeptide from UDP-MurNAc-pentapeptide onto the lipid carrier undecaprenyl phosphate, yielding undecaprenyl-pyrophosphoryl-MurNAc-pentapeptide, known as lipid I.</text>
</comment>
<comment type="catalytic activity">
    <reaction evidence="1">
        <text>UDP-N-acetyl-alpha-D-muramoyl-L-alanyl-gamma-D-glutamyl-L-lysyl-D-alanyl-D-alanine + di-trans,octa-cis-undecaprenyl phosphate = Mur2Ac(oyl-L-Ala-gamma-D-Glu-L-Lys-D-Ala-D-Ala)-di-trans,octa-cis-undecaprenyl diphosphate + UMP</text>
        <dbReference type="Rhea" id="RHEA:21920"/>
        <dbReference type="ChEBI" id="CHEBI:57865"/>
        <dbReference type="ChEBI" id="CHEBI:60032"/>
        <dbReference type="ChEBI" id="CHEBI:60392"/>
        <dbReference type="ChEBI" id="CHEBI:70758"/>
        <dbReference type="EC" id="2.7.8.13"/>
    </reaction>
</comment>
<comment type="cofactor">
    <cofactor evidence="1">
        <name>Mg(2+)</name>
        <dbReference type="ChEBI" id="CHEBI:18420"/>
    </cofactor>
</comment>
<comment type="pathway">
    <text evidence="1">Cell wall biogenesis; peptidoglycan biosynthesis.</text>
</comment>
<comment type="subcellular location">
    <subcellularLocation>
        <location evidence="1">Cell membrane</location>
        <topology evidence="1">Multi-pass membrane protein</topology>
    </subcellularLocation>
</comment>
<comment type="similarity">
    <text evidence="1">Belongs to the glycosyltransferase 4 family. MraY subfamily.</text>
</comment>
<gene>
    <name evidence="1" type="primary">mraY</name>
    <name type="ordered locus">EF_0992</name>
</gene>
<keyword id="KW-0131">Cell cycle</keyword>
<keyword id="KW-0132">Cell division</keyword>
<keyword id="KW-1003">Cell membrane</keyword>
<keyword id="KW-0133">Cell shape</keyword>
<keyword id="KW-0961">Cell wall biogenesis/degradation</keyword>
<keyword id="KW-0460">Magnesium</keyword>
<keyword id="KW-0472">Membrane</keyword>
<keyword id="KW-0479">Metal-binding</keyword>
<keyword id="KW-0573">Peptidoglycan synthesis</keyword>
<keyword id="KW-1185">Reference proteome</keyword>
<keyword id="KW-0808">Transferase</keyword>
<keyword id="KW-0812">Transmembrane</keyword>
<keyword id="KW-1133">Transmembrane helix</keyword>
<dbReference type="EC" id="2.7.8.13" evidence="1"/>
<dbReference type="EMBL" id="U94707">
    <property type="protein sequence ID" value="AAC45634.1"/>
    <property type="molecule type" value="Genomic_DNA"/>
</dbReference>
<dbReference type="EMBL" id="AE016830">
    <property type="protein sequence ID" value="AAO80798.1"/>
    <property type="molecule type" value="Genomic_DNA"/>
</dbReference>
<dbReference type="RefSeq" id="NP_814728.1">
    <property type="nucleotide sequence ID" value="NC_004668.1"/>
</dbReference>
<dbReference type="RefSeq" id="WP_002355894.1">
    <property type="nucleotide sequence ID" value="NZ_KE136527.1"/>
</dbReference>
<dbReference type="SMR" id="O07107"/>
<dbReference type="STRING" id="226185.EF_0992"/>
<dbReference type="EnsemblBacteria" id="AAO80798">
    <property type="protein sequence ID" value="AAO80798"/>
    <property type="gene ID" value="EF_0992"/>
</dbReference>
<dbReference type="GeneID" id="60893379"/>
<dbReference type="KEGG" id="efa:EF0992"/>
<dbReference type="PATRIC" id="fig|226185.45.peg.3198"/>
<dbReference type="eggNOG" id="COG0472">
    <property type="taxonomic scope" value="Bacteria"/>
</dbReference>
<dbReference type="HOGENOM" id="CLU_023982_0_1_9"/>
<dbReference type="UniPathway" id="UPA00219"/>
<dbReference type="Proteomes" id="UP000001415">
    <property type="component" value="Chromosome"/>
</dbReference>
<dbReference type="GO" id="GO:0005886">
    <property type="term" value="C:plasma membrane"/>
    <property type="evidence" value="ECO:0007669"/>
    <property type="project" value="UniProtKB-SubCell"/>
</dbReference>
<dbReference type="GO" id="GO:0046872">
    <property type="term" value="F:metal ion binding"/>
    <property type="evidence" value="ECO:0007669"/>
    <property type="project" value="UniProtKB-KW"/>
</dbReference>
<dbReference type="GO" id="GO:0008963">
    <property type="term" value="F:phospho-N-acetylmuramoyl-pentapeptide-transferase activity"/>
    <property type="evidence" value="ECO:0007669"/>
    <property type="project" value="UniProtKB-UniRule"/>
</dbReference>
<dbReference type="GO" id="GO:0051301">
    <property type="term" value="P:cell division"/>
    <property type="evidence" value="ECO:0007669"/>
    <property type="project" value="UniProtKB-KW"/>
</dbReference>
<dbReference type="GO" id="GO:0071555">
    <property type="term" value="P:cell wall organization"/>
    <property type="evidence" value="ECO:0007669"/>
    <property type="project" value="UniProtKB-KW"/>
</dbReference>
<dbReference type="GO" id="GO:0009252">
    <property type="term" value="P:peptidoglycan biosynthetic process"/>
    <property type="evidence" value="ECO:0007669"/>
    <property type="project" value="UniProtKB-UniRule"/>
</dbReference>
<dbReference type="GO" id="GO:0008360">
    <property type="term" value="P:regulation of cell shape"/>
    <property type="evidence" value="ECO:0007669"/>
    <property type="project" value="UniProtKB-KW"/>
</dbReference>
<dbReference type="CDD" id="cd06852">
    <property type="entry name" value="GT_MraY"/>
    <property type="match status" value="1"/>
</dbReference>
<dbReference type="HAMAP" id="MF_00038">
    <property type="entry name" value="MraY"/>
    <property type="match status" value="1"/>
</dbReference>
<dbReference type="InterPro" id="IPR000715">
    <property type="entry name" value="Glycosyl_transferase_4"/>
</dbReference>
<dbReference type="InterPro" id="IPR003524">
    <property type="entry name" value="PNAcMuramoyl-5peptid_Trfase"/>
</dbReference>
<dbReference type="InterPro" id="IPR018480">
    <property type="entry name" value="PNAcMuramoyl-5peptid_Trfase_CS"/>
</dbReference>
<dbReference type="NCBIfam" id="TIGR00445">
    <property type="entry name" value="mraY"/>
    <property type="match status" value="1"/>
</dbReference>
<dbReference type="PANTHER" id="PTHR22926">
    <property type="entry name" value="PHOSPHO-N-ACETYLMURAMOYL-PENTAPEPTIDE-TRANSFERASE"/>
    <property type="match status" value="1"/>
</dbReference>
<dbReference type="PANTHER" id="PTHR22926:SF5">
    <property type="entry name" value="PHOSPHO-N-ACETYLMURAMOYL-PENTAPEPTIDE-TRANSFERASE HOMOLOG"/>
    <property type="match status" value="1"/>
</dbReference>
<dbReference type="Pfam" id="PF00953">
    <property type="entry name" value="Glycos_transf_4"/>
    <property type="match status" value="1"/>
</dbReference>
<dbReference type="Pfam" id="PF10555">
    <property type="entry name" value="MraY_sig1"/>
    <property type="match status" value="1"/>
</dbReference>
<dbReference type="PROSITE" id="PS01347">
    <property type="entry name" value="MRAY_1"/>
    <property type="match status" value="1"/>
</dbReference>
<dbReference type="PROSITE" id="PS01348">
    <property type="entry name" value="MRAY_2"/>
    <property type="match status" value="1"/>
</dbReference>
<name>MRAY_ENTFA</name>